<keyword id="KW-0238">DNA-binding</keyword>
<keyword id="KW-0678">Repressor</keyword>
<keyword id="KW-0804">Transcription</keyword>
<keyword id="KW-0805">Transcription regulation</keyword>
<feature type="chain" id="PRO_1000139721" description="HTH-type transcriptional repressor NanR">
    <location>
        <begin position="1"/>
        <end position="263"/>
    </location>
</feature>
<feature type="domain" description="HTH gntR-type" evidence="1">
    <location>
        <begin position="30"/>
        <end position="98"/>
    </location>
</feature>
<feature type="DNA-binding region" description="H-T-H motif" evidence="1">
    <location>
        <begin position="58"/>
        <end position="77"/>
    </location>
</feature>
<feature type="region of interest" description="Disordered" evidence="2">
    <location>
        <begin position="1"/>
        <end position="22"/>
    </location>
</feature>
<reference key="1">
    <citation type="journal article" date="2009" name="PLoS Genet.">
        <title>Organised genome dynamics in the Escherichia coli species results in highly diverse adaptive paths.</title>
        <authorList>
            <person name="Touchon M."/>
            <person name="Hoede C."/>
            <person name="Tenaillon O."/>
            <person name="Barbe V."/>
            <person name="Baeriswyl S."/>
            <person name="Bidet P."/>
            <person name="Bingen E."/>
            <person name="Bonacorsi S."/>
            <person name="Bouchier C."/>
            <person name="Bouvet O."/>
            <person name="Calteau A."/>
            <person name="Chiapello H."/>
            <person name="Clermont O."/>
            <person name="Cruveiller S."/>
            <person name="Danchin A."/>
            <person name="Diard M."/>
            <person name="Dossat C."/>
            <person name="Karoui M.E."/>
            <person name="Frapy E."/>
            <person name="Garry L."/>
            <person name="Ghigo J.M."/>
            <person name="Gilles A.M."/>
            <person name="Johnson J."/>
            <person name="Le Bouguenec C."/>
            <person name="Lescat M."/>
            <person name="Mangenot S."/>
            <person name="Martinez-Jehanne V."/>
            <person name="Matic I."/>
            <person name="Nassif X."/>
            <person name="Oztas S."/>
            <person name="Petit M.A."/>
            <person name="Pichon C."/>
            <person name="Rouy Z."/>
            <person name="Ruf C.S."/>
            <person name="Schneider D."/>
            <person name="Tourret J."/>
            <person name="Vacherie B."/>
            <person name="Vallenet D."/>
            <person name="Medigue C."/>
            <person name="Rocha E.P.C."/>
            <person name="Denamur E."/>
        </authorList>
    </citation>
    <scope>NUCLEOTIDE SEQUENCE [LARGE SCALE GENOMIC DNA]</scope>
    <source>
        <strain>IAI1</strain>
    </source>
</reference>
<name>NANR_ECO8A</name>
<dbReference type="EMBL" id="CU928160">
    <property type="protein sequence ID" value="CAR00182.1"/>
    <property type="molecule type" value="Genomic_DNA"/>
</dbReference>
<dbReference type="RefSeq" id="WP_000523845.1">
    <property type="nucleotide sequence ID" value="NC_011741.1"/>
</dbReference>
<dbReference type="SMR" id="B7M0T8"/>
<dbReference type="GeneID" id="75206076"/>
<dbReference type="KEGG" id="ecr:ECIAI1_3368"/>
<dbReference type="HOGENOM" id="CLU_017584_9_1_6"/>
<dbReference type="GO" id="GO:0003677">
    <property type="term" value="F:DNA binding"/>
    <property type="evidence" value="ECO:0007669"/>
    <property type="project" value="UniProtKB-KW"/>
</dbReference>
<dbReference type="GO" id="GO:0003700">
    <property type="term" value="F:DNA-binding transcription factor activity"/>
    <property type="evidence" value="ECO:0007669"/>
    <property type="project" value="UniProtKB-UniRule"/>
</dbReference>
<dbReference type="GO" id="GO:0045892">
    <property type="term" value="P:negative regulation of DNA-templated transcription"/>
    <property type="evidence" value="ECO:0007669"/>
    <property type="project" value="UniProtKB-UniRule"/>
</dbReference>
<dbReference type="CDD" id="cd07377">
    <property type="entry name" value="WHTH_GntR"/>
    <property type="match status" value="1"/>
</dbReference>
<dbReference type="FunFam" id="1.10.10.10:FF:000150">
    <property type="entry name" value="HTH-type transcriptional repressor NanR"/>
    <property type="match status" value="1"/>
</dbReference>
<dbReference type="FunFam" id="1.20.120.530:FF:000006">
    <property type="entry name" value="HTH-type transcriptional repressor NanR"/>
    <property type="match status" value="1"/>
</dbReference>
<dbReference type="Gene3D" id="1.20.120.530">
    <property type="entry name" value="GntR ligand-binding domain-like"/>
    <property type="match status" value="1"/>
</dbReference>
<dbReference type="Gene3D" id="1.10.10.10">
    <property type="entry name" value="Winged helix-like DNA-binding domain superfamily/Winged helix DNA-binding domain"/>
    <property type="match status" value="1"/>
</dbReference>
<dbReference type="HAMAP" id="MF_01236">
    <property type="entry name" value="HTH_NanR"/>
    <property type="match status" value="1"/>
</dbReference>
<dbReference type="InterPro" id="IPR011711">
    <property type="entry name" value="GntR_C"/>
</dbReference>
<dbReference type="InterPro" id="IPR008920">
    <property type="entry name" value="TF_FadR/GntR_C"/>
</dbReference>
<dbReference type="InterPro" id="IPR000524">
    <property type="entry name" value="Tscrpt_reg_HTH_GntR"/>
</dbReference>
<dbReference type="InterPro" id="IPR023730">
    <property type="entry name" value="Tscrpt_reg_NanR"/>
</dbReference>
<dbReference type="InterPro" id="IPR036388">
    <property type="entry name" value="WH-like_DNA-bd_sf"/>
</dbReference>
<dbReference type="InterPro" id="IPR036390">
    <property type="entry name" value="WH_DNA-bd_sf"/>
</dbReference>
<dbReference type="NCBIfam" id="NF003011">
    <property type="entry name" value="PRK03837.1"/>
    <property type="match status" value="1"/>
</dbReference>
<dbReference type="PANTHER" id="PTHR43537:SF53">
    <property type="entry name" value="HTH-TYPE TRANSCRIPTIONAL REPRESSOR NANR"/>
    <property type="match status" value="1"/>
</dbReference>
<dbReference type="PANTHER" id="PTHR43537">
    <property type="entry name" value="TRANSCRIPTIONAL REGULATOR, GNTR FAMILY"/>
    <property type="match status" value="1"/>
</dbReference>
<dbReference type="Pfam" id="PF07729">
    <property type="entry name" value="FCD"/>
    <property type="match status" value="1"/>
</dbReference>
<dbReference type="Pfam" id="PF00392">
    <property type="entry name" value="GntR"/>
    <property type="match status" value="1"/>
</dbReference>
<dbReference type="PRINTS" id="PR00035">
    <property type="entry name" value="HTHGNTR"/>
</dbReference>
<dbReference type="SMART" id="SM00895">
    <property type="entry name" value="FCD"/>
    <property type="match status" value="1"/>
</dbReference>
<dbReference type="SMART" id="SM00345">
    <property type="entry name" value="HTH_GNTR"/>
    <property type="match status" value="1"/>
</dbReference>
<dbReference type="SUPFAM" id="SSF48008">
    <property type="entry name" value="GntR ligand-binding domain-like"/>
    <property type="match status" value="1"/>
</dbReference>
<dbReference type="SUPFAM" id="SSF46785">
    <property type="entry name" value="Winged helix' DNA-binding domain"/>
    <property type="match status" value="1"/>
</dbReference>
<dbReference type="PROSITE" id="PS50949">
    <property type="entry name" value="HTH_GNTR"/>
    <property type="match status" value="1"/>
</dbReference>
<sequence length="263" mass="29524">MGLMNAFDSQTEDSSPAIGRNLRSRPLARKKLSEMVEEELEQMIRRREFGEGEQLPSERELMAFFNVGRPSVREALAALKRKGLVQINNGERARVSRPSADTIIGELSGMAKDFLSHPGGIAHFEQLRLFFESSLVRYAAEHATDEQIDLLAKALEINSQSLDNNAAFIRSDVDFHRVLAEIPGNPIFMAIHVALLDWLIAARPTVTDQALHEHNNVSYQQHIAIVDAIRRHDPDEADRALQSHLNSVSATWHAFGQTTNKKK</sequence>
<accession>B7M0T8</accession>
<protein>
    <recommendedName>
        <fullName evidence="1">HTH-type transcriptional repressor NanR</fullName>
    </recommendedName>
</protein>
<proteinExistence type="inferred from homology"/>
<comment type="function">
    <text evidence="1">Transcriptional repressor that controls expression of the genes required for the catabolism of sialic acids.</text>
</comment>
<comment type="similarity">
    <text evidence="1">Belongs to the NanR family.</text>
</comment>
<gene>
    <name evidence="1" type="primary">nanR</name>
    <name type="ordered locus">ECIAI1_3368</name>
</gene>
<evidence type="ECO:0000255" key="1">
    <source>
        <dbReference type="HAMAP-Rule" id="MF_01236"/>
    </source>
</evidence>
<evidence type="ECO:0000256" key="2">
    <source>
        <dbReference type="SAM" id="MobiDB-lite"/>
    </source>
</evidence>
<organism>
    <name type="scientific">Escherichia coli O8 (strain IAI1)</name>
    <dbReference type="NCBI Taxonomy" id="585034"/>
    <lineage>
        <taxon>Bacteria</taxon>
        <taxon>Pseudomonadati</taxon>
        <taxon>Pseudomonadota</taxon>
        <taxon>Gammaproteobacteria</taxon>
        <taxon>Enterobacterales</taxon>
        <taxon>Enterobacteriaceae</taxon>
        <taxon>Escherichia</taxon>
    </lineage>
</organism>